<sequence>MAEFPASLLILNGKSTDNLPLREAIMLLREEGMTIHVRVTWEKGDAARYVEEARKLGVATVIAGGGDGTINEVSTALIQCEGDDIPALGILPLGTANDFATSVGIPEALDKALKLAIAGNAIAIDMAQVNKQTCFINMATGGFGTRITTETPEKLKAALGGVSYIIHGLMRMDTLQPDRCEIRGENFHWQGDALVIGIGNGRQAGGGQQLCPNALINDGLLQLRIFTGDEILPALVSTLKSDEDNPNIIEGASSWFDIQAPHEITFNLDGEPLSGQNFHIEILPAALRCRLPPDCPLLR</sequence>
<protein>
    <recommendedName>
        <fullName evidence="1">Probable lipid kinase YegS</fullName>
        <ecNumber evidence="1">2.7.1.-</ecNumber>
    </recommendedName>
</protein>
<gene>
    <name evidence="1" type="primary">yegS</name>
    <name type="ordered locus">ECH74115_3068</name>
</gene>
<comment type="function">
    <text evidence="1">Probably phosphorylates lipids; the in vivo substrate is unknown.</text>
</comment>
<comment type="cofactor">
    <cofactor evidence="1">
        <name>Mg(2+)</name>
        <dbReference type="ChEBI" id="CHEBI:18420"/>
    </cofactor>
    <cofactor evidence="1">
        <name>Ca(2+)</name>
        <dbReference type="ChEBI" id="CHEBI:29108"/>
    </cofactor>
    <text evidence="1">Binds 1 Mg(2+) ion per subunit. Ca(2+) may be able to substitute.</text>
</comment>
<comment type="subcellular location">
    <subcellularLocation>
        <location evidence="1">Cytoplasm</location>
    </subcellularLocation>
</comment>
<comment type="similarity">
    <text evidence="1">Belongs to the diacylglycerol/lipid kinase family. YegS lipid kinase subfamily.</text>
</comment>
<feature type="chain" id="PRO_1000144863" description="Probable lipid kinase YegS">
    <location>
        <begin position="1"/>
        <end position="299"/>
    </location>
</feature>
<feature type="domain" description="DAGKc" evidence="1">
    <location>
        <begin position="2"/>
        <end position="133"/>
    </location>
</feature>
<feature type="active site" description="Proton acceptor" evidence="1">
    <location>
        <position position="271"/>
    </location>
</feature>
<feature type="binding site" evidence="1">
    <location>
        <position position="40"/>
    </location>
    <ligand>
        <name>ATP</name>
        <dbReference type="ChEBI" id="CHEBI:30616"/>
    </ligand>
</feature>
<feature type="binding site" evidence="1">
    <location>
        <begin position="66"/>
        <end position="72"/>
    </location>
    <ligand>
        <name>ATP</name>
        <dbReference type="ChEBI" id="CHEBI:30616"/>
    </ligand>
</feature>
<feature type="binding site" evidence="1">
    <location>
        <position position="95"/>
    </location>
    <ligand>
        <name>ATP</name>
        <dbReference type="ChEBI" id="CHEBI:30616"/>
    </ligand>
</feature>
<feature type="binding site" evidence="1">
    <location>
        <position position="215"/>
    </location>
    <ligand>
        <name>Mg(2+)</name>
        <dbReference type="ChEBI" id="CHEBI:18420"/>
    </ligand>
</feature>
<feature type="binding site" evidence="1">
    <location>
        <position position="218"/>
    </location>
    <ligand>
        <name>Mg(2+)</name>
        <dbReference type="ChEBI" id="CHEBI:18420"/>
    </ligand>
</feature>
<feature type="binding site" evidence="1">
    <location>
        <position position="220"/>
    </location>
    <ligand>
        <name>Mg(2+)</name>
        <dbReference type="ChEBI" id="CHEBI:18420"/>
    </ligand>
</feature>
<dbReference type="EC" id="2.7.1.-" evidence="1"/>
<dbReference type="EMBL" id="CP001164">
    <property type="protein sequence ID" value="ACI35560.1"/>
    <property type="molecule type" value="Genomic_DNA"/>
</dbReference>
<dbReference type="RefSeq" id="WP_000807362.1">
    <property type="nucleotide sequence ID" value="NC_011353.1"/>
</dbReference>
<dbReference type="SMR" id="B5YV36"/>
<dbReference type="GeneID" id="75205975"/>
<dbReference type="KEGG" id="ecf:ECH74115_3068"/>
<dbReference type="HOGENOM" id="CLU_045532_1_1_6"/>
<dbReference type="GO" id="GO:0005737">
    <property type="term" value="C:cytoplasm"/>
    <property type="evidence" value="ECO:0007669"/>
    <property type="project" value="UniProtKB-SubCell"/>
</dbReference>
<dbReference type="GO" id="GO:0005886">
    <property type="term" value="C:plasma membrane"/>
    <property type="evidence" value="ECO:0007669"/>
    <property type="project" value="TreeGrafter"/>
</dbReference>
<dbReference type="GO" id="GO:0005524">
    <property type="term" value="F:ATP binding"/>
    <property type="evidence" value="ECO:0007669"/>
    <property type="project" value="UniProtKB-UniRule"/>
</dbReference>
<dbReference type="GO" id="GO:0001727">
    <property type="term" value="F:lipid kinase activity"/>
    <property type="evidence" value="ECO:0007669"/>
    <property type="project" value="UniProtKB-UniRule"/>
</dbReference>
<dbReference type="GO" id="GO:0000287">
    <property type="term" value="F:magnesium ion binding"/>
    <property type="evidence" value="ECO:0007669"/>
    <property type="project" value="UniProtKB-UniRule"/>
</dbReference>
<dbReference type="GO" id="GO:0008654">
    <property type="term" value="P:phospholipid biosynthetic process"/>
    <property type="evidence" value="ECO:0007669"/>
    <property type="project" value="UniProtKB-UniRule"/>
</dbReference>
<dbReference type="FunFam" id="2.60.200.40:FF:000008">
    <property type="entry name" value="Probable lipid kinase YegS"/>
    <property type="match status" value="1"/>
</dbReference>
<dbReference type="FunFam" id="3.40.50.10330:FF:000008">
    <property type="entry name" value="Probable lipid kinase YegS"/>
    <property type="match status" value="1"/>
</dbReference>
<dbReference type="Gene3D" id="2.60.200.40">
    <property type="match status" value="1"/>
</dbReference>
<dbReference type="Gene3D" id="3.40.50.10330">
    <property type="entry name" value="Probable inorganic polyphosphate/atp-NAD kinase, domain 1"/>
    <property type="match status" value="1"/>
</dbReference>
<dbReference type="HAMAP" id="MF_01377">
    <property type="entry name" value="YegS"/>
    <property type="match status" value="1"/>
</dbReference>
<dbReference type="InterPro" id="IPR017438">
    <property type="entry name" value="ATP-NAD_kinase_N"/>
</dbReference>
<dbReference type="InterPro" id="IPR005218">
    <property type="entry name" value="Diacylglycerol/lipid_kinase"/>
</dbReference>
<dbReference type="InterPro" id="IPR001206">
    <property type="entry name" value="Diacylglycerol_kinase_cat_dom"/>
</dbReference>
<dbReference type="InterPro" id="IPR022433">
    <property type="entry name" value="Lip_kinase_YegS"/>
</dbReference>
<dbReference type="InterPro" id="IPR050187">
    <property type="entry name" value="Lipid_Phosphate_FormReg"/>
</dbReference>
<dbReference type="InterPro" id="IPR016064">
    <property type="entry name" value="NAD/diacylglycerol_kinase_sf"/>
</dbReference>
<dbReference type="InterPro" id="IPR045540">
    <property type="entry name" value="YegS/DAGK_C"/>
</dbReference>
<dbReference type="NCBIfam" id="TIGR03702">
    <property type="entry name" value="lip_kinase_YegS"/>
    <property type="match status" value="1"/>
</dbReference>
<dbReference type="NCBIfam" id="NF009602">
    <property type="entry name" value="PRK13054.1"/>
    <property type="match status" value="1"/>
</dbReference>
<dbReference type="NCBIfam" id="TIGR00147">
    <property type="entry name" value="YegS/Rv2252/BmrU family lipid kinase"/>
    <property type="match status" value="1"/>
</dbReference>
<dbReference type="PANTHER" id="PTHR12358:SF106">
    <property type="entry name" value="LIPID KINASE YEGS"/>
    <property type="match status" value="1"/>
</dbReference>
<dbReference type="PANTHER" id="PTHR12358">
    <property type="entry name" value="SPHINGOSINE KINASE"/>
    <property type="match status" value="1"/>
</dbReference>
<dbReference type="Pfam" id="PF00781">
    <property type="entry name" value="DAGK_cat"/>
    <property type="match status" value="1"/>
</dbReference>
<dbReference type="Pfam" id="PF19279">
    <property type="entry name" value="YegS_C"/>
    <property type="match status" value="1"/>
</dbReference>
<dbReference type="SMART" id="SM00046">
    <property type="entry name" value="DAGKc"/>
    <property type="match status" value="1"/>
</dbReference>
<dbReference type="SUPFAM" id="SSF111331">
    <property type="entry name" value="NAD kinase/diacylglycerol kinase-like"/>
    <property type="match status" value="1"/>
</dbReference>
<dbReference type="PROSITE" id="PS50146">
    <property type="entry name" value="DAGK"/>
    <property type="match status" value="1"/>
</dbReference>
<organism>
    <name type="scientific">Escherichia coli O157:H7 (strain EC4115 / EHEC)</name>
    <dbReference type="NCBI Taxonomy" id="444450"/>
    <lineage>
        <taxon>Bacteria</taxon>
        <taxon>Pseudomonadati</taxon>
        <taxon>Pseudomonadota</taxon>
        <taxon>Gammaproteobacteria</taxon>
        <taxon>Enterobacterales</taxon>
        <taxon>Enterobacteriaceae</taxon>
        <taxon>Escherichia</taxon>
    </lineage>
</organism>
<proteinExistence type="inferred from homology"/>
<name>YEGS_ECO5E</name>
<evidence type="ECO:0000255" key="1">
    <source>
        <dbReference type="HAMAP-Rule" id="MF_01377"/>
    </source>
</evidence>
<keyword id="KW-0067">ATP-binding</keyword>
<keyword id="KW-0963">Cytoplasm</keyword>
<keyword id="KW-0418">Kinase</keyword>
<keyword id="KW-0444">Lipid biosynthesis</keyword>
<keyword id="KW-0443">Lipid metabolism</keyword>
<keyword id="KW-0460">Magnesium</keyword>
<keyword id="KW-0479">Metal-binding</keyword>
<keyword id="KW-0547">Nucleotide-binding</keyword>
<keyword id="KW-0594">Phospholipid biosynthesis</keyword>
<keyword id="KW-1208">Phospholipid metabolism</keyword>
<keyword id="KW-0808">Transferase</keyword>
<accession>B5YV36</accession>
<reference key="1">
    <citation type="journal article" date="2011" name="Proc. Natl. Acad. Sci. U.S.A.">
        <title>Genomic anatomy of Escherichia coli O157:H7 outbreaks.</title>
        <authorList>
            <person name="Eppinger M."/>
            <person name="Mammel M.K."/>
            <person name="Leclerc J.E."/>
            <person name="Ravel J."/>
            <person name="Cebula T.A."/>
        </authorList>
    </citation>
    <scope>NUCLEOTIDE SEQUENCE [LARGE SCALE GENOMIC DNA]</scope>
    <source>
        <strain>EC4115 / EHEC</strain>
    </source>
</reference>